<dbReference type="EC" id="2.1.1.-"/>
<dbReference type="EC" id="3.1.21.7"/>
<dbReference type="EMBL" id="BA000011">
    <property type="protein sequence ID" value="BAB59937.1"/>
    <property type="molecule type" value="Genomic_DNA"/>
</dbReference>
<dbReference type="RefSeq" id="WP_010917039.1">
    <property type="nucleotide sequence ID" value="NC_002689.2"/>
</dbReference>
<dbReference type="SMR" id="Q97AL5"/>
<dbReference type="STRING" id="273116.gene:9381585"/>
<dbReference type="PaxDb" id="273116-14325011"/>
<dbReference type="DNASU" id="1441887"/>
<dbReference type="GeneID" id="1441887"/>
<dbReference type="KEGG" id="tvo:TVG0795955"/>
<dbReference type="eggNOG" id="arCOG00929">
    <property type="taxonomic scope" value="Archaea"/>
</dbReference>
<dbReference type="eggNOG" id="arCOG02724">
    <property type="taxonomic scope" value="Archaea"/>
</dbReference>
<dbReference type="HOGENOM" id="CLU_047631_1_1_2"/>
<dbReference type="OrthoDB" id="372118at2157"/>
<dbReference type="PhylomeDB" id="Q97AL5"/>
<dbReference type="Proteomes" id="UP000001017">
    <property type="component" value="Chromosome"/>
</dbReference>
<dbReference type="GO" id="GO:0005737">
    <property type="term" value="C:cytoplasm"/>
    <property type="evidence" value="ECO:0007669"/>
    <property type="project" value="UniProtKB-SubCell"/>
</dbReference>
<dbReference type="GO" id="GO:0043737">
    <property type="term" value="F:deoxyribonuclease V activity"/>
    <property type="evidence" value="ECO:0007669"/>
    <property type="project" value="UniProtKB-EC"/>
</dbReference>
<dbReference type="GO" id="GO:0046872">
    <property type="term" value="F:metal ion binding"/>
    <property type="evidence" value="ECO:0007669"/>
    <property type="project" value="UniProtKB-KW"/>
</dbReference>
<dbReference type="GO" id="GO:0008168">
    <property type="term" value="F:methyltransferase activity"/>
    <property type="evidence" value="ECO:0007669"/>
    <property type="project" value="UniProtKB-KW"/>
</dbReference>
<dbReference type="GO" id="GO:0016891">
    <property type="term" value="F:RNA endonuclease activity, producing 5'-phosphomonoesters"/>
    <property type="evidence" value="ECO:0007669"/>
    <property type="project" value="TreeGrafter"/>
</dbReference>
<dbReference type="GO" id="GO:0003727">
    <property type="term" value="F:single-stranded RNA binding"/>
    <property type="evidence" value="ECO:0007669"/>
    <property type="project" value="TreeGrafter"/>
</dbReference>
<dbReference type="GO" id="GO:0006281">
    <property type="term" value="P:DNA repair"/>
    <property type="evidence" value="ECO:0007669"/>
    <property type="project" value="UniProtKB-KW"/>
</dbReference>
<dbReference type="GO" id="GO:0032259">
    <property type="term" value="P:methylation"/>
    <property type="evidence" value="ECO:0007669"/>
    <property type="project" value="UniProtKB-KW"/>
</dbReference>
<dbReference type="CDD" id="cd06445">
    <property type="entry name" value="ATase"/>
    <property type="match status" value="1"/>
</dbReference>
<dbReference type="Gene3D" id="3.30.2170.10">
    <property type="entry name" value="archaeoglobus fulgidus dsm 4304 superfamily"/>
    <property type="match status" value="1"/>
</dbReference>
<dbReference type="Gene3D" id="1.10.10.10">
    <property type="entry name" value="Winged helix-like DNA-binding domain superfamily/Winged helix DNA-binding domain"/>
    <property type="match status" value="1"/>
</dbReference>
<dbReference type="InterPro" id="IPR007581">
    <property type="entry name" value="Endonuclease-V"/>
</dbReference>
<dbReference type="InterPro" id="IPR014048">
    <property type="entry name" value="MethylDNA_cys_MeTrfase_DNA-bd"/>
</dbReference>
<dbReference type="InterPro" id="IPR036217">
    <property type="entry name" value="MethylDNA_cys_MeTrfase_DNAb"/>
</dbReference>
<dbReference type="InterPro" id="IPR036388">
    <property type="entry name" value="WH-like_DNA-bd_sf"/>
</dbReference>
<dbReference type="NCBIfam" id="TIGR00589">
    <property type="entry name" value="ogt"/>
    <property type="match status" value="1"/>
</dbReference>
<dbReference type="PANTHER" id="PTHR28511">
    <property type="entry name" value="ENDONUCLEASE V"/>
    <property type="match status" value="1"/>
</dbReference>
<dbReference type="PANTHER" id="PTHR28511:SF1">
    <property type="entry name" value="ENDONUCLEASE V"/>
    <property type="match status" value="1"/>
</dbReference>
<dbReference type="Pfam" id="PF01035">
    <property type="entry name" value="DNA_binding_1"/>
    <property type="match status" value="1"/>
</dbReference>
<dbReference type="Pfam" id="PF04493">
    <property type="entry name" value="Endonuclease_5"/>
    <property type="match status" value="1"/>
</dbReference>
<dbReference type="SUPFAM" id="SSF46767">
    <property type="entry name" value="Methylated DNA-protein cysteine methyltransferase, C-terminal domain"/>
    <property type="match status" value="1"/>
</dbReference>
<keyword id="KW-0963">Cytoplasm</keyword>
<keyword id="KW-0227">DNA damage</keyword>
<keyword id="KW-0234">DNA repair</keyword>
<keyword id="KW-0255">Endonuclease</keyword>
<keyword id="KW-0378">Hydrolase</keyword>
<keyword id="KW-0460">Magnesium</keyword>
<keyword id="KW-0479">Metal-binding</keyword>
<keyword id="KW-0489">Methyltransferase</keyword>
<keyword id="KW-0511">Multifunctional enzyme</keyword>
<keyword id="KW-0540">Nuclease</keyword>
<keyword id="KW-0808">Transferase</keyword>
<comment type="function">
    <text evidence="1">DNA repair enzyme involved in the repair of deaminated bases. Selectively cleaves double-stranded DNA at the second phosphodiester bond 3' to a deoxyinosine leaving behind the intact lesion on the nicked DNA (By similarity).</text>
</comment>
<comment type="catalytic activity">
    <reaction>
        <text>Endonucleolytic cleavage at apurinic or apyrimidinic sites to products with a 5'-phosphate.</text>
        <dbReference type="EC" id="3.1.21.7"/>
    </reaction>
</comment>
<comment type="cofactor">
    <cofactor evidence="1">
        <name>Mg(2+)</name>
        <dbReference type="ChEBI" id="CHEBI:18420"/>
    </cofactor>
</comment>
<comment type="subcellular location">
    <subcellularLocation>
        <location evidence="1">Cytoplasm</location>
    </subcellularLocation>
</comment>
<comment type="similarity">
    <text evidence="3">In the N-terminal section; belongs to the MGMT family.</text>
</comment>
<comment type="similarity">
    <text evidence="3">In the C-terminal section; belongs to the endonuclease V family.</text>
</comment>
<evidence type="ECO:0000250" key="1"/>
<evidence type="ECO:0000255" key="2"/>
<evidence type="ECO:0000305" key="3"/>
<organism>
    <name type="scientific">Thermoplasma volcanium (strain ATCC 51530 / DSM 4299 / JCM 9571 / NBRC 15438 / GSS1)</name>
    <dbReference type="NCBI Taxonomy" id="273116"/>
    <lineage>
        <taxon>Archaea</taxon>
        <taxon>Methanobacteriati</taxon>
        <taxon>Thermoplasmatota</taxon>
        <taxon>Thermoplasmata</taxon>
        <taxon>Thermoplasmatales</taxon>
        <taxon>Thermoplasmataceae</taxon>
        <taxon>Thermoplasma</taxon>
    </lineage>
</organism>
<accession>Q97AL5</accession>
<protein>
    <recommendedName>
        <fullName>Bifunctional methyltransferase/endonuclease</fullName>
    </recommendedName>
    <domain>
        <recommendedName>
            <fullName>Probable methylated-DNA--protein-cysteine methyltransferase</fullName>
            <ecNumber>2.1.1.-</ecNumber>
        </recommendedName>
        <alternativeName>
            <fullName>O-6-methylbase-DNA-alkyltransferase</fullName>
        </alternativeName>
    </domain>
    <domain>
        <recommendedName>
            <fullName>Endonuclease V</fullName>
            <ecNumber>3.1.21.7</ecNumber>
        </recommendedName>
        <alternativeName>
            <fullName>Deoxyinosine 3'endonuclease</fullName>
        </alternativeName>
        <alternativeName>
            <fullName>Deoxyribonuclease V</fullName>
            <shortName>DNase V</shortName>
        </alternativeName>
    </domain>
</protein>
<name>NFI_THEVO</name>
<gene>
    <name type="ordered locus">TV0795</name>
    <name type="ORF">TVG0795955</name>
</gene>
<proteinExistence type="inferred from homology"/>
<sequence length="321" mass="36049">MLSVDYENFDLISYLYNLVRQIPDGMVSTYGDLAEALGDPVAARSVGFMLSINKEPDYIPCYKVVPHDGSVGNYTHPLGSAEKMRRLIRDGITITNGHISNFEKVRFREFKTDYPLRKLRELQFKIGRLYDDRNDYSLDTIAAFDVSYKETRGYASKVVYNKGKIGAYVYSSDSMFPYIPGYLAFKEFKFIRALYDNETMILIDGNGILHPRFAGLATHAGVSLKTASIGIAKHLINCTVKGSDLLISGVVAGKMIGHHTIVSPGNRINVEEAGRLIEQREGKEMRSLLRLAHNLTRLHIETNGNIARYDFSTRNTAIQSS</sequence>
<feature type="chain" id="PRO_0000159700" description="Bifunctional methyltransferase/endonuclease">
    <location>
        <begin position="1"/>
        <end position="321"/>
    </location>
</feature>
<feature type="region of interest" description="Probable methylated-DNA--protein-cysteine methyltransferase">
    <location>
        <begin position="1"/>
        <end position="86"/>
    </location>
</feature>
<feature type="region of interest" description="Endonuclease V">
    <location>
        <begin position="87"/>
        <end position="318"/>
    </location>
</feature>
<feature type="active site" evidence="2">
    <location>
        <position position="61"/>
    </location>
</feature>
<feature type="binding site" evidence="1">
    <location>
        <position position="145"/>
    </location>
    <ligand>
        <name>Mg(2+)</name>
        <dbReference type="ChEBI" id="CHEBI:18420"/>
    </ligand>
</feature>
<feature type="binding site" evidence="1">
    <location>
        <position position="204"/>
    </location>
    <ligand>
        <name>Mg(2+)</name>
        <dbReference type="ChEBI" id="CHEBI:18420"/>
    </ligand>
</feature>
<feature type="site" description="Interaction with target DNA" evidence="1">
    <location>
        <position position="178"/>
    </location>
</feature>
<reference key="1">
    <citation type="journal article" date="2000" name="Proc. Natl. Acad. Sci. U.S.A.">
        <title>Archaeal adaptation to higher temperatures revealed by genomic sequence of Thermoplasma volcanium.</title>
        <authorList>
            <person name="Kawashima T."/>
            <person name="Amano N."/>
            <person name="Koike H."/>
            <person name="Makino S."/>
            <person name="Higuchi S."/>
            <person name="Kawashima-Ohya Y."/>
            <person name="Watanabe K."/>
            <person name="Yamazaki M."/>
            <person name="Kanehori K."/>
            <person name="Kawamoto T."/>
            <person name="Nunoshiba T."/>
            <person name="Yamamoto Y."/>
            <person name="Aramaki H."/>
            <person name="Makino K."/>
            <person name="Suzuki M."/>
        </authorList>
    </citation>
    <scope>NUCLEOTIDE SEQUENCE [LARGE SCALE GENOMIC DNA]</scope>
    <source>
        <strain>ATCC 51530 / DSM 4299 / JCM 9571 / NBRC 15438 / GSS1</strain>
    </source>
</reference>